<organism>
    <name type="scientific">Mus musculus</name>
    <name type="common">Mouse</name>
    <dbReference type="NCBI Taxonomy" id="10090"/>
    <lineage>
        <taxon>Eukaryota</taxon>
        <taxon>Metazoa</taxon>
        <taxon>Chordata</taxon>
        <taxon>Craniata</taxon>
        <taxon>Vertebrata</taxon>
        <taxon>Euteleostomi</taxon>
        <taxon>Mammalia</taxon>
        <taxon>Eutheria</taxon>
        <taxon>Euarchontoglires</taxon>
        <taxon>Glires</taxon>
        <taxon>Rodentia</taxon>
        <taxon>Myomorpha</taxon>
        <taxon>Muroidea</taxon>
        <taxon>Muridae</taxon>
        <taxon>Murinae</taxon>
        <taxon>Mus</taxon>
        <taxon>Mus</taxon>
    </lineage>
</organism>
<protein>
    <recommendedName>
        <fullName>Cardiotrophin-1</fullName>
        <shortName>CT-1</shortName>
    </recommendedName>
</protein>
<gene>
    <name type="primary">Ctf1</name>
</gene>
<keyword id="KW-0202">Cytokine</keyword>
<keyword id="KW-1185">Reference proteome</keyword>
<keyword id="KW-0964">Secreted</keyword>
<dbReference type="EMBL" id="U18366">
    <property type="protein sequence ID" value="AAC52173.1"/>
    <property type="molecule type" value="mRNA"/>
</dbReference>
<dbReference type="EMBL" id="BC024381">
    <property type="protein sequence ID" value="AAH24381.1"/>
    <property type="molecule type" value="mRNA"/>
</dbReference>
<dbReference type="CCDS" id="CCDS21875.1"/>
<dbReference type="PIR" id="I49153">
    <property type="entry name" value="I49153"/>
</dbReference>
<dbReference type="RefSeq" id="NP_031821.1">
    <property type="nucleotide sequence ID" value="NM_007795.3"/>
</dbReference>
<dbReference type="SMR" id="Q60753"/>
<dbReference type="DIP" id="DIP-5773N"/>
<dbReference type="FunCoup" id="Q60753">
    <property type="interactions" value="522"/>
</dbReference>
<dbReference type="STRING" id="10090.ENSMUSP00000049161"/>
<dbReference type="PhosphoSitePlus" id="Q60753"/>
<dbReference type="PaxDb" id="10090-ENSMUSP00000049161"/>
<dbReference type="ProteomicsDB" id="284141"/>
<dbReference type="Pumba" id="Q60753"/>
<dbReference type="Antibodypedia" id="27491">
    <property type="antibodies" value="503 antibodies from 32 providers"/>
</dbReference>
<dbReference type="DNASU" id="13019"/>
<dbReference type="Ensembl" id="ENSMUST00000047393.7">
    <property type="protein sequence ID" value="ENSMUSP00000049161.6"/>
    <property type="gene ID" value="ENSMUSG00000042340.7"/>
</dbReference>
<dbReference type="GeneID" id="13019"/>
<dbReference type="KEGG" id="mmu:13019"/>
<dbReference type="UCSC" id="uc009jwm.2">
    <property type="organism name" value="mouse"/>
</dbReference>
<dbReference type="AGR" id="MGI:105115"/>
<dbReference type="CTD" id="1489"/>
<dbReference type="MGI" id="MGI:105115">
    <property type="gene designation" value="Ctf1"/>
</dbReference>
<dbReference type="VEuPathDB" id="HostDB:ENSMUSG00000042340"/>
<dbReference type="eggNOG" id="ENOG502S5Z6">
    <property type="taxonomic scope" value="Eukaryota"/>
</dbReference>
<dbReference type="GeneTree" id="ENSGT00510000048856"/>
<dbReference type="HOGENOM" id="CLU_117233_0_0_1"/>
<dbReference type="InParanoid" id="Q60753"/>
<dbReference type="OMA" id="CQQMDLN"/>
<dbReference type="OrthoDB" id="9938401at2759"/>
<dbReference type="PhylomeDB" id="Q60753"/>
<dbReference type="TreeFam" id="TF333266"/>
<dbReference type="Reactome" id="R-MMU-6788467">
    <property type="pathway name" value="IL-6-type cytokine receptor ligand interactions"/>
</dbReference>
<dbReference type="BioGRID-ORCS" id="13019">
    <property type="hits" value="4 hits in 78 CRISPR screens"/>
</dbReference>
<dbReference type="PRO" id="PR:Q60753"/>
<dbReference type="Proteomes" id="UP000000589">
    <property type="component" value="Chromosome 7"/>
</dbReference>
<dbReference type="RNAct" id="Q60753">
    <property type="molecule type" value="protein"/>
</dbReference>
<dbReference type="Bgee" id="ENSMUSG00000042340">
    <property type="expression patterns" value="Expressed in vestibular membrane of cochlear duct and 180 other cell types or tissues"/>
</dbReference>
<dbReference type="ExpressionAtlas" id="Q60753">
    <property type="expression patterns" value="baseline and differential"/>
</dbReference>
<dbReference type="GO" id="GO:0005615">
    <property type="term" value="C:extracellular space"/>
    <property type="evidence" value="ECO:0007669"/>
    <property type="project" value="UniProtKB-KW"/>
</dbReference>
<dbReference type="GO" id="GO:0005125">
    <property type="term" value="F:cytokine activity"/>
    <property type="evidence" value="ECO:0007669"/>
    <property type="project" value="UniProtKB-KW"/>
</dbReference>
<dbReference type="GO" id="GO:0048666">
    <property type="term" value="P:neuron development"/>
    <property type="evidence" value="ECO:0000316"/>
    <property type="project" value="MGI"/>
</dbReference>
<dbReference type="FunFam" id="1.20.1250.10:FF:000027">
    <property type="entry name" value="Cardiotrophin 1"/>
    <property type="match status" value="1"/>
</dbReference>
<dbReference type="Gene3D" id="1.20.1250.10">
    <property type="match status" value="1"/>
</dbReference>
<dbReference type="InterPro" id="IPR009079">
    <property type="entry name" value="4_helix_cytokine-like_core"/>
</dbReference>
<dbReference type="InterPro" id="IPR010681">
    <property type="entry name" value="PRF/CT"/>
</dbReference>
<dbReference type="PANTHER" id="PTHR21353">
    <property type="match status" value="1"/>
</dbReference>
<dbReference type="PANTHER" id="PTHR21353:SF2">
    <property type="entry name" value="CARDIOTROPHIN-1"/>
    <property type="match status" value="1"/>
</dbReference>
<dbReference type="SUPFAM" id="SSF47266">
    <property type="entry name" value="4-helical cytokines"/>
    <property type="match status" value="1"/>
</dbReference>
<proteinExistence type="evidence at transcript level"/>
<accession>Q60753</accession>
<sequence length="203" mass="21509">MSQREGSLEDHQTDSSISFLPHLEAKIRQTHNLARLLTKYAEQLLEEYVQQQGEPFGLPGFSPPRLPLAGLSGPAPSHAGLPVSERLRQDAAALSVLPALLDAVRRRQAELNPRAPRLLRSLEDAARQVRALGAAVETVLAALGAAARGPGPEPVTVATLFTANSTAGIFSAKVLGFHVCGLYGEWVSRTEGDLGQLVPGGVA</sequence>
<name>CTF1_MOUSE</name>
<comment type="function">
    <text>Induces cardiac myocyte hypertrophy in vitro. Binds to and activates the ILST/gp130 receptor.</text>
</comment>
<comment type="subcellular location">
    <subcellularLocation>
        <location>Secreted</location>
    </subcellularLocation>
</comment>
<comment type="tissue specificity">
    <text>Highly expressed in heart, skeletal muscle, liver, lung and kidney. Lower levels in testis and brain. No expression in spleen.</text>
</comment>
<comment type="similarity">
    <text evidence="1">Belongs to the IL-6 superfamily.</text>
</comment>
<feature type="chain" id="PRO_0000058763" description="Cardiotrophin-1">
    <location>
        <begin position="1"/>
        <end position="203"/>
    </location>
</feature>
<reference key="1">
    <citation type="journal article" date="1995" name="Proc. Natl. Acad. Sci. U.S.A.">
        <title>Expression cloning of cardiotrophin 1, a cytokine that induces cardiac myocyte hypertrophy.</title>
        <authorList>
            <person name="Pennica D."/>
            <person name="King K.L."/>
            <person name="Shaw K.J."/>
            <person name="Luis E."/>
            <person name="Rullamas J."/>
            <person name="Luoh S.-M."/>
            <person name="Darbonne W.C."/>
            <person name="Knutzon D.S."/>
            <person name="Yen R."/>
            <person name="Chien K.R."/>
            <person name="Baker J.B."/>
            <person name="Wood W.I."/>
        </authorList>
    </citation>
    <scope>NUCLEOTIDE SEQUENCE [MRNA]</scope>
</reference>
<reference key="2">
    <citation type="journal article" date="2004" name="Genome Res.">
        <title>The status, quality, and expansion of the NIH full-length cDNA project: the Mammalian Gene Collection (MGC).</title>
        <authorList>
            <consortium name="The MGC Project Team"/>
        </authorList>
    </citation>
    <scope>NUCLEOTIDE SEQUENCE [LARGE SCALE MRNA]</scope>
    <source>
        <strain>FVB/N</strain>
        <tissue>Colon</tissue>
    </source>
</reference>
<evidence type="ECO:0000305" key="1"/>